<proteinExistence type="evidence at protein level"/>
<organism>
    <name type="scientific">Homo sapiens</name>
    <name type="common">Human</name>
    <dbReference type="NCBI Taxonomy" id="9606"/>
    <lineage>
        <taxon>Eukaryota</taxon>
        <taxon>Metazoa</taxon>
        <taxon>Chordata</taxon>
        <taxon>Craniata</taxon>
        <taxon>Vertebrata</taxon>
        <taxon>Euteleostomi</taxon>
        <taxon>Mammalia</taxon>
        <taxon>Eutheria</taxon>
        <taxon>Euarchontoglires</taxon>
        <taxon>Primates</taxon>
        <taxon>Haplorrhini</taxon>
        <taxon>Catarrhini</taxon>
        <taxon>Hominidae</taxon>
        <taxon>Homo</taxon>
    </lineage>
</organism>
<sequence>MEAAAVTVTRSATRRRRRQLQGLAAPEAGTQEEQEDQEPRPRRRRPGRSIKDEEEETVFREVVSFSPDPLPVRYYDKDTTKPISFYLSSLEELLAWKPRLEDGFNVALEPLACRQPPLSSQRPRTLLCHDMMGGYLDDRFIQGSVVQTPYAFYHWQCIDVFVYFSHHTVTIPPVGWTNTAHRHGVCVLGTFITEWNEGGRLCEAFLAGDERSYQAVADRLVQITQFFRFDGWLINIENSLSLAAVGNMPPFLRYLTTQLHRQVPGGLVLWYDSVVQSGQLKWQDELNQHNRVFFDSCDGFFTNYNWREEHLERMLGQAGERRADVYVGVDVFARGNVVGGRFDTDKSLELIRKHGFSVALFAPGWVYECLEKKDFFQNQDKFWGRLERYLPTHSICSLPFVTSFCLGMGARRVCYGQEEAVGPWYHLSAQEIQPLFGEHRLGGDGRGWVRTHCCLEDAWHGGSSLLVRGVIPPEVGNVAVRLFSLQAPVPPKIYLSMVYKLEGPTDVTVALELTTGDAGSCHIGGISVLNAETSSRHSLRPLRVPPTKLARWVGRCGRQLSGGWVQHCYEVSLRGCLLLDLLVCFSRPPGSREEESFTCRLGEIQVVDAASLLAPLPQVQAVTISHIRWQPSASEREGPPALLQLSCTLHWSFLLSQVRCFRIHCWGGMSDDSPGRELPRPEMPMFLGLAFATQYRIVDLLVEAAGPGQDRRMEFLVEPVPKEGFRVPQAEWGRAVLLYSAPA</sequence>
<keyword id="KW-0007">Acetylation</keyword>
<keyword id="KW-0025">Alternative splicing</keyword>
<keyword id="KW-0963">Cytoplasm</keyword>
<keyword id="KW-0326">Glycosidase</keyword>
<keyword id="KW-0378">Hydrolase</keyword>
<keyword id="KW-0597">Phosphoprotein</keyword>
<keyword id="KW-1267">Proteomics identification</keyword>
<keyword id="KW-1185">Reference proteome</keyword>
<protein>
    <recommendedName>
        <fullName>Cytosolic endo-beta-N-acetylglucosaminidase</fullName>
        <shortName>ENGase</shortName>
        <ecNumber>3.2.1.96</ecNumber>
    </recommendedName>
</protein>
<name>ENASE_HUMAN</name>
<accession>Q8NFI3</accession>
<accession>Q659F0</accession>
<accession>Q8TB86</accession>
<accession>Q9H6U4</accession>
<feature type="chain" id="PRO_0000328867" description="Cytosolic endo-beta-N-acetylglucosaminidase">
    <location>
        <begin position="1"/>
        <end position="743"/>
    </location>
</feature>
<feature type="domain" description="BRCT" evidence="2">
    <location>
        <begin position="291"/>
        <end position="383"/>
    </location>
</feature>
<feature type="region of interest" description="Disordered" evidence="3">
    <location>
        <begin position="1"/>
        <end position="55"/>
    </location>
</feature>
<feature type="compositionally biased region" description="Low complexity" evidence="3">
    <location>
        <begin position="1"/>
        <end position="11"/>
    </location>
</feature>
<feature type="modified residue" description="N-acetylmethionine" evidence="10">
    <location>
        <position position="1"/>
    </location>
</feature>
<feature type="modified residue" description="Phosphoserine" evidence="9 11 12">
    <location>
        <position position="66"/>
    </location>
</feature>
<feature type="splice variant" id="VSP_032835" description="In isoform 3." evidence="7">
    <original>SLELIRKHGFSVALFAPGWVYECLEKKDFFQNQDKFWGRLERYLPTHSICSLPFVTSFCL</original>
    <variation>VGGGFRPRASGPVPPLGPHFLMDLPFPSAPQRNDSSCSSQSGDPVALRNRCPAPAKLCPH</variation>
    <location>
        <begin position="347"/>
        <end position="406"/>
    </location>
</feature>
<feature type="splice variant" id="VSP_032836" description="In isoform 2." evidence="6">
    <original>GWVYECLEKKDFFQ</original>
    <variation>SCSVFPGVGNLLCC</variation>
    <location>
        <begin position="364"/>
        <end position="377"/>
    </location>
</feature>
<feature type="splice variant" id="VSP_032837" description="In isoform 2." evidence="6">
    <location>
        <begin position="378"/>
        <end position="743"/>
    </location>
</feature>
<feature type="splice variant" id="VSP_032838" description="In isoform 3." evidence="7">
    <location>
        <begin position="407"/>
        <end position="743"/>
    </location>
</feature>
<feature type="sequence variant" id="VAR_060188" description="In dbSNP:rs4789879." evidence="5">
    <original>S</original>
    <variation>N</variation>
    <location>
        <position position="596"/>
    </location>
</feature>
<feature type="sequence variant" id="VAR_060189" description="In dbSNP:rs11871357.">
    <original>E</original>
    <variation>K</variation>
    <location>
        <position position="731"/>
    </location>
</feature>
<feature type="sequence conflict" description="In Ref. 2; BAB15158." evidence="8" ref="2">
    <original>F</original>
    <variation>L</variation>
    <location>
        <position position="152"/>
    </location>
</feature>
<feature type="sequence conflict" description="In Ref. 4; CAH56405." evidence="8" ref="4">
    <original>T</original>
    <variation>A</variation>
    <location>
        <position position="224"/>
    </location>
</feature>
<evidence type="ECO:0000250" key="1"/>
<evidence type="ECO:0000255" key="2">
    <source>
        <dbReference type="PROSITE-ProRule" id="PRU00033"/>
    </source>
</evidence>
<evidence type="ECO:0000256" key="3">
    <source>
        <dbReference type="SAM" id="MobiDB-lite"/>
    </source>
</evidence>
<evidence type="ECO:0000269" key="4">
    <source>
    </source>
</evidence>
<evidence type="ECO:0000269" key="5">
    <source>
    </source>
</evidence>
<evidence type="ECO:0000303" key="6">
    <source>
    </source>
</evidence>
<evidence type="ECO:0000303" key="7">
    <source>
    </source>
</evidence>
<evidence type="ECO:0000305" key="8"/>
<evidence type="ECO:0007744" key="9">
    <source>
    </source>
</evidence>
<evidence type="ECO:0007744" key="10">
    <source>
    </source>
</evidence>
<evidence type="ECO:0007744" key="11">
    <source>
    </source>
</evidence>
<evidence type="ECO:0007744" key="12">
    <source>
    </source>
</evidence>
<reference key="1">
    <citation type="journal article" date="2002" name="Proc. Natl. Acad. Sci. U.S.A.">
        <title>Endo-beta-N-acetylglucosaminidase, an enzyme involved in processing of free oligosaccharides in the cytosol.</title>
        <authorList>
            <person name="Suzuki T."/>
            <person name="Yano K."/>
            <person name="Sugimoto S."/>
            <person name="Kitajima K."/>
            <person name="Lennarz W.J."/>
            <person name="Inoue S."/>
            <person name="Inoue Y."/>
            <person name="Emori Y."/>
        </authorList>
    </citation>
    <scope>NUCLEOTIDE SEQUENCE [MRNA] (ISOFORM 1)</scope>
    <scope>FUNCTION</scope>
    <scope>TISSUE SPECIFICITY</scope>
</reference>
<reference key="2">
    <citation type="journal article" date="2004" name="Nat. Genet.">
        <title>Complete sequencing and characterization of 21,243 full-length human cDNAs.</title>
        <authorList>
            <person name="Ota T."/>
            <person name="Suzuki Y."/>
            <person name="Nishikawa T."/>
            <person name="Otsuki T."/>
            <person name="Sugiyama T."/>
            <person name="Irie R."/>
            <person name="Wakamatsu A."/>
            <person name="Hayashi K."/>
            <person name="Sato H."/>
            <person name="Nagai K."/>
            <person name="Kimura K."/>
            <person name="Makita H."/>
            <person name="Sekine M."/>
            <person name="Obayashi M."/>
            <person name="Nishi T."/>
            <person name="Shibahara T."/>
            <person name="Tanaka T."/>
            <person name="Ishii S."/>
            <person name="Yamamoto J."/>
            <person name="Saito K."/>
            <person name="Kawai Y."/>
            <person name="Isono Y."/>
            <person name="Nakamura Y."/>
            <person name="Nagahari K."/>
            <person name="Murakami K."/>
            <person name="Yasuda T."/>
            <person name="Iwayanagi T."/>
            <person name="Wagatsuma M."/>
            <person name="Shiratori A."/>
            <person name="Sudo H."/>
            <person name="Hosoiri T."/>
            <person name="Kaku Y."/>
            <person name="Kodaira H."/>
            <person name="Kondo H."/>
            <person name="Sugawara M."/>
            <person name="Takahashi M."/>
            <person name="Kanda K."/>
            <person name="Yokoi T."/>
            <person name="Furuya T."/>
            <person name="Kikkawa E."/>
            <person name="Omura Y."/>
            <person name="Abe K."/>
            <person name="Kamihara K."/>
            <person name="Katsuta N."/>
            <person name="Sato K."/>
            <person name="Tanikawa M."/>
            <person name="Yamazaki M."/>
            <person name="Ninomiya K."/>
            <person name="Ishibashi T."/>
            <person name="Yamashita H."/>
            <person name="Murakawa K."/>
            <person name="Fujimori K."/>
            <person name="Tanai H."/>
            <person name="Kimata M."/>
            <person name="Watanabe M."/>
            <person name="Hiraoka S."/>
            <person name="Chiba Y."/>
            <person name="Ishida S."/>
            <person name="Ono Y."/>
            <person name="Takiguchi S."/>
            <person name="Watanabe S."/>
            <person name="Yosida M."/>
            <person name="Hotuta T."/>
            <person name="Kusano J."/>
            <person name="Kanehori K."/>
            <person name="Takahashi-Fujii A."/>
            <person name="Hara H."/>
            <person name="Tanase T.-O."/>
            <person name="Nomura Y."/>
            <person name="Togiya S."/>
            <person name="Komai F."/>
            <person name="Hara R."/>
            <person name="Takeuchi K."/>
            <person name="Arita M."/>
            <person name="Imose N."/>
            <person name="Musashino K."/>
            <person name="Yuuki H."/>
            <person name="Oshima A."/>
            <person name="Sasaki N."/>
            <person name="Aotsuka S."/>
            <person name="Yoshikawa Y."/>
            <person name="Matsunawa H."/>
            <person name="Ichihara T."/>
            <person name="Shiohata N."/>
            <person name="Sano S."/>
            <person name="Moriya S."/>
            <person name="Momiyama H."/>
            <person name="Satoh N."/>
            <person name="Takami S."/>
            <person name="Terashima Y."/>
            <person name="Suzuki O."/>
            <person name="Nakagawa S."/>
            <person name="Senoh A."/>
            <person name="Mizoguchi H."/>
            <person name="Goto Y."/>
            <person name="Shimizu F."/>
            <person name="Wakebe H."/>
            <person name="Hishigaki H."/>
            <person name="Watanabe T."/>
            <person name="Sugiyama A."/>
            <person name="Takemoto M."/>
            <person name="Kawakami B."/>
            <person name="Yamazaki M."/>
            <person name="Watanabe K."/>
            <person name="Kumagai A."/>
            <person name="Itakura S."/>
            <person name="Fukuzumi Y."/>
            <person name="Fujimori Y."/>
            <person name="Komiyama M."/>
            <person name="Tashiro H."/>
            <person name="Tanigami A."/>
            <person name="Fujiwara T."/>
            <person name="Ono T."/>
            <person name="Yamada K."/>
            <person name="Fujii Y."/>
            <person name="Ozaki K."/>
            <person name="Hirao M."/>
            <person name="Ohmori Y."/>
            <person name="Kawabata A."/>
            <person name="Hikiji T."/>
            <person name="Kobatake N."/>
            <person name="Inagaki H."/>
            <person name="Ikema Y."/>
            <person name="Okamoto S."/>
            <person name="Okitani R."/>
            <person name="Kawakami T."/>
            <person name="Noguchi S."/>
            <person name="Itoh T."/>
            <person name="Shigeta K."/>
            <person name="Senba T."/>
            <person name="Matsumura K."/>
            <person name="Nakajima Y."/>
            <person name="Mizuno T."/>
            <person name="Morinaga M."/>
            <person name="Sasaki M."/>
            <person name="Togashi T."/>
            <person name="Oyama M."/>
            <person name="Hata H."/>
            <person name="Watanabe M."/>
            <person name="Komatsu T."/>
            <person name="Mizushima-Sugano J."/>
            <person name="Satoh T."/>
            <person name="Shirai Y."/>
            <person name="Takahashi Y."/>
            <person name="Nakagawa K."/>
            <person name="Okumura K."/>
            <person name="Nagase T."/>
            <person name="Nomura N."/>
            <person name="Kikuchi H."/>
            <person name="Masuho Y."/>
            <person name="Yamashita R."/>
            <person name="Nakai K."/>
            <person name="Yada T."/>
            <person name="Nakamura Y."/>
            <person name="Ohara O."/>
            <person name="Isogai T."/>
            <person name="Sugano S."/>
        </authorList>
    </citation>
    <scope>NUCLEOTIDE SEQUENCE [LARGE SCALE MRNA] (ISOFORM 2)</scope>
    <source>
        <tissue>Hepatoma</tissue>
    </source>
</reference>
<reference key="3">
    <citation type="submission" date="2005-07" db="EMBL/GenBank/DDBJ databases">
        <authorList>
            <person name="Mural R.J."/>
            <person name="Istrail S."/>
            <person name="Sutton G.G."/>
            <person name="Florea L."/>
            <person name="Halpern A.L."/>
            <person name="Mobarry C.M."/>
            <person name="Lippert R."/>
            <person name="Walenz B."/>
            <person name="Shatkay H."/>
            <person name="Dew I."/>
            <person name="Miller J.R."/>
            <person name="Flanigan M.J."/>
            <person name="Edwards N.J."/>
            <person name="Bolanos R."/>
            <person name="Fasulo D."/>
            <person name="Halldorsson B.V."/>
            <person name="Hannenhalli S."/>
            <person name="Turner R."/>
            <person name="Yooseph S."/>
            <person name="Lu F."/>
            <person name="Nusskern D.R."/>
            <person name="Shue B.C."/>
            <person name="Zheng X.H."/>
            <person name="Zhong F."/>
            <person name="Delcher A.L."/>
            <person name="Huson D.H."/>
            <person name="Kravitz S.A."/>
            <person name="Mouchard L."/>
            <person name="Reinert K."/>
            <person name="Remington K.A."/>
            <person name="Clark A.G."/>
            <person name="Waterman M.S."/>
            <person name="Eichler E.E."/>
            <person name="Adams M.D."/>
            <person name="Hunkapiller M.W."/>
            <person name="Myers E.W."/>
            <person name="Venter J.C."/>
        </authorList>
    </citation>
    <scope>NUCLEOTIDE SEQUENCE [LARGE SCALE GENOMIC DNA]</scope>
</reference>
<reference key="4">
    <citation type="journal article" date="2007" name="BMC Genomics">
        <title>The full-ORF clone resource of the German cDNA consortium.</title>
        <authorList>
            <person name="Bechtel S."/>
            <person name="Rosenfelder H."/>
            <person name="Duda A."/>
            <person name="Schmidt C.P."/>
            <person name="Ernst U."/>
            <person name="Wellenreuther R."/>
            <person name="Mehrle A."/>
            <person name="Schuster C."/>
            <person name="Bahr A."/>
            <person name="Bloecker H."/>
            <person name="Heubner D."/>
            <person name="Hoerlein A."/>
            <person name="Michel G."/>
            <person name="Wedler H."/>
            <person name="Koehrer K."/>
            <person name="Ottenwaelder B."/>
            <person name="Poustka A."/>
            <person name="Wiemann S."/>
            <person name="Schupp I."/>
        </authorList>
    </citation>
    <scope>NUCLEOTIDE SEQUENCE [LARGE SCALE MRNA] OF 224-680 (ISOFORM 3)</scope>
    <source>
        <tissue>Testis</tissue>
    </source>
</reference>
<reference key="5">
    <citation type="journal article" date="2004" name="Genome Res.">
        <title>The status, quality, and expansion of the NIH full-length cDNA project: the Mammalian Gene Collection (MGC).</title>
        <authorList>
            <consortium name="The MGC Project Team"/>
        </authorList>
    </citation>
    <scope>NUCLEOTIDE SEQUENCE [LARGE SCALE MRNA] OF 486-743 (ISOFORM 1)</scope>
    <scope>VARIANT ASN-596</scope>
    <source>
        <tissue>Skin</tissue>
    </source>
</reference>
<reference key="6">
    <citation type="journal article" date="2009" name="Sci. Signal.">
        <title>Quantitative phosphoproteomic analysis of T cell receptor signaling reveals system-wide modulation of protein-protein interactions.</title>
        <authorList>
            <person name="Mayya V."/>
            <person name="Lundgren D.H."/>
            <person name="Hwang S.-I."/>
            <person name="Rezaul K."/>
            <person name="Wu L."/>
            <person name="Eng J.K."/>
            <person name="Rodionov V."/>
            <person name="Han D.K."/>
        </authorList>
    </citation>
    <scope>PHOSPHORYLATION [LARGE SCALE ANALYSIS] AT SER-66</scope>
    <scope>IDENTIFICATION BY MASS SPECTROMETRY [LARGE SCALE ANALYSIS]</scope>
    <source>
        <tissue>Leukemic T-cell</tissue>
    </source>
</reference>
<reference key="7">
    <citation type="journal article" date="2012" name="Proc. Natl. Acad. Sci. U.S.A.">
        <title>N-terminal acetylome analyses and functional insights of the N-terminal acetyltransferase NatB.</title>
        <authorList>
            <person name="Van Damme P."/>
            <person name="Lasa M."/>
            <person name="Polevoda B."/>
            <person name="Gazquez C."/>
            <person name="Elosegui-Artola A."/>
            <person name="Kim D.S."/>
            <person name="De Juan-Pardo E."/>
            <person name="Demeyer K."/>
            <person name="Hole K."/>
            <person name="Larrea E."/>
            <person name="Timmerman E."/>
            <person name="Prieto J."/>
            <person name="Arnesen T."/>
            <person name="Sherman F."/>
            <person name="Gevaert K."/>
            <person name="Aldabe R."/>
        </authorList>
    </citation>
    <scope>ACETYLATION [LARGE SCALE ANALYSIS] AT MET-1</scope>
    <scope>IDENTIFICATION BY MASS SPECTROMETRY [LARGE SCALE ANALYSIS]</scope>
</reference>
<reference key="8">
    <citation type="journal article" date="2013" name="J. Proteome Res.">
        <title>Toward a comprehensive characterization of a human cancer cell phosphoproteome.</title>
        <authorList>
            <person name="Zhou H."/>
            <person name="Di Palma S."/>
            <person name="Preisinger C."/>
            <person name="Peng M."/>
            <person name="Polat A.N."/>
            <person name="Heck A.J."/>
            <person name="Mohammed S."/>
        </authorList>
    </citation>
    <scope>PHOSPHORYLATION [LARGE SCALE ANALYSIS] AT SER-66</scope>
    <scope>IDENTIFICATION BY MASS SPECTROMETRY [LARGE SCALE ANALYSIS]</scope>
    <source>
        <tissue>Cervix carcinoma</tissue>
        <tissue>Erythroleukemia</tissue>
    </source>
</reference>
<reference key="9">
    <citation type="journal article" date="2014" name="J. Proteomics">
        <title>An enzyme assisted RP-RPLC approach for in-depth analysis of human liver phosphoproteome.</title>
        <authorList>
            <person name="Bian Y."/>
            <person name="Song C."/>
            <person name="Cheng K."/>
            <person name="Dong M."/>
            <person name="Wang F."/>
            <person name="Huang J."/>
            <person name="Sun D."/>
            <person name="Wang L."/>
            <person name="Ye M."/>
            <person name="Zou H."/>
        </authorList>
    </citation>
    <scope>PHOSPHORYLATION [LARGE SCALE ANALYSIS] AT SER-66</scope>
    <scope>IDENTIFICATION BY MASS SPECTROMETRY [LARGE SCALE ANALYSIS]</scope>
    <source>
        <tissue>Liver</tissue>
    </source>
</reference>
<dbReference type="EC" id="3.2.1.96"/>
<dbReference type="EMBL" id="AF512564">
    <property type="protein sequence ID" value="AAM80487.1"/>
    <property type="molecule type" value="mRNA"/>
</dbReference>
<dbReference type="EMBL" id="AK025518">
    <property type="protein sequence ID" value="BAB15158.1"/>
    <property type="molecule type" value="mRNA"/>
</dbReference>
<dbReference type="EMBL" id="CH471099">
    <property type="protein sequence ID" value="EAW89562.1"/>
    <property type="molecule type" value="Genomic_DNA"/>
</dbReference>
<dbReference type="EMBL" id="AL110283">
    <property type="protein sequence ID" value="CAH56405.1"/>
    <property type="molecule type" value="mRNA"/>
</dbReference>
<dbReference type="EMBL" id="BC024213">
    <property type="protein sequence ID" value="AAH24213.2"/>
    <property type="status" value="ALT_FRAME"/>
    <property type="molecule type" value="mRNA"/>
</dbReference>
<dbReference type="CCDS" id="CCDS42394.1">
    <molecule id="Q8NFI3-1"/>
</dbReference>
<dbReference type="RefSeq" id="NP_001036038.1">
    <molecule id="Q8NFI3-1"/>
    <property type="nucleotide sequence ID" value="NM_001042573.3"/>
</dbReference>
<dbReference type="SMR" id="Q8NFI3"/>
<dbReference type="BioGRID" id="122283">
    <property type="interactions" value="13"/>
</dbReference>
<dbReference type="FunCoup" id="Q8NFI3">
    <property type="interactions" value="512"/>
</dbReference>
<dbReference type="IntAct" id="Q8NFI3">
    <property type="interactions" value="5"/>
</dbReference>
<dbReference type="STRING" id="9606.ENSP00000462333"/>
<dbReference type="BindingDB" id="Q8NFI3"/>
<dbReference type="ChEMBL" id="CHEMBL5172"/>
<dbReference type="DrugCentral" id="Q8NFI3"/>
<dbReference type="CAZy" id="GH85">
    <property type="family name" value="Glycoside Hydrolase Family 85"/>
</dbReference>
<dbReference type="GlyCosmos" id="Q8NFI3">
    <property type="glycosylation" value="1 site, 1 glycan"/>
</dbReference>
<dbReference type="GlyGen" id="Q8NFI3">
    <property type="glycosylation" value="1 site, 1 O-linked glycan (1 site)"/>
</dbReference>
<dbReference type="iPTMnet" id="Q8NFI3"/>
<dbReference type="PhosphoSitePlus" id="Q8NFI3"/>
<dbReference type="SwissPalm" id="Q8NFI3"/>
<dbReference type="BioMuta" id="ENGASE"/>
<dbReference type="DMDM" id="74715557"/>
<dbReference type="jPOST" id="Q8NFI3"/>
<dbReference type="MassIVE" id="Q8NFI3"/>
<dbReference type="PaxDb" id="9606-ENSP00000462333"/>
<dbReference type="PeptideAtlas" id="Q8NFI3"/>
<dbReference type="ProteomicsDB" id="73312">
    <molecule id="Q8NFI3-1"/>
</dbReference>
<dbReference type="ProteomicsDB" id="73313">
    <molecule id="Q8NFI3-2"/>
</dbReference>
<dbReference type="ProteomicsDB" id="73314">
    <molecule id="Q8NFI3-3"/>
</dbReference>
<dbReference type="Pumba" id="Q8NFI3"/>
<dbReference type="Antibodypedia" id="9971">
    <property type="antibodies" value="71 antibodies from 19 providers"/>
</dbReference>
<dbReference type="DNASU" id="64772"/>
<dbReference type="Ensembl" id="ENST00000311595.14">
    <molecule id="Q8NFI3-3"/>
    <property type="protein sequence ID" value="ENSP00000308158.10"/>
    <property type="gene ID" value="ENSG00000167280.17"/>
</dbReference>
<dbReference type="Ensembl" id="ENST00000579016.6">
    <molecule id="Q8NFI3-1"/>
    <property type="protein sequence ID" value="ENSP00000462333.1"/>
    <property type="gene ID" value="ENSG00000167280.17"/>
</dbReference>
<dbReference type="GeneID" id="64772"/>
<dbReference type="KEGG" id="hsa:64772"/>
<dbReference type="MANE-Select" id="ENST00000579016.6">
    <property type="protein sequence ID" value="ENSP00000462333.1"/>
    <property type="RefSeq nucleotide sequence ID" value="NM_001042573.3"/>
    <property type="RefSeq protein sequence ID" value="NP_001036038.1"/>
</dbReference>
<dbReference type="UCSC" id="uc002jwv.5">
    <molecule id="Q8NFI3-1"/>
    <property type="organism name" value="human"/>
</dbReference>
<dbReference type="AGR" id="HGNC:24622"/>
<dbReference type="CTD" id="64772"/>
<dbReference type="DisGeNET" id="64772"/>
<dbReference type="GeneCards" id="ENGASE"/>
<dbReference type="HGNC" id="HGNC:24622">
    <property type="gene designation" value="ENGASE"/>
</dbReference>
<dbReference type="HPA" id="ENSG00000167280">
    <property type="expression patterns" value="Low tissue specificity"/>
</dbReference>
<dbReference type="MIM" id="611898">
    <property type="type" value="gene"/>
</dbReference>
<dbReference type="neXtProt" id="NX_Q8NFI3"/>
<dbReference type="OpenTargets" id="ENSG00000167280"/>
<dbReference type="PharmGKB" id="PA164719123"/>
<dbReference type="VEuPathDB" id="HostDB:ENSG00000167280"/>
<dbReference type="eggNOG" id="KOG2331">
    <property type="taxonomic scope" value="Eukaryota"/>
</dbReference>
<dbReference type="GeneTree" id="ENSGT00390000018512"/>
<dbReference type="HOGENOM" id="CLU_015297_0_0_1"/>
<dbReference type="InParanoid" id="Q8NFI3"/>
<dbReference type="OMA" id="SQVRWQP"/>
<dbReference type="OrthoDB" id="284473at2759"/>
<dbReference type="PAN-GO" id="Q8NFI3">
    <property type="GO annotations" value="2 GO annotations based on evolutionary models"/>
</dbReference>
<dbReference type="PhylomeDB" id="Q8NFI3"/>
<dbReference type="TreeFam" id="TF314391"/>
<dbReference type="BRENDA" id="3.2.1.96">
    <property type="organism ID" value="2681"/>
</dbReference>
<dbReference type="PathwayCommons" id="Q8NFI3"/>
<dbReference type="Reactome" id="R-HSA-532668">
    <property type="pathway name" value="N-glycan trimming in the ER and Calnexin/Calreticulin cycle"/>
</dbReference>
<dbReference type="SignaLink" id="Q8NFI3"/>
<dbReference type="BioGRID-ORCS" id="64772">
    <property type="hits" value="13 hits in 1158 CRISPR screens"/>
</dbReference>
<dbReference type="ChiTaRS" id="ENGASE">
    <property type="organism name" value="human"/>
</dbReference>
<dbReference type="GenomeRNAi" id="64772"/>
<dbReference type="Pharos" id="Q8NFI3">
    <property type="development level" value="Tchem"/>
</dbReference>
<dbReference type="PRO" id="PR:Q8NFI3"/>
<dbReference type="Proteomes" id="UP000005640">
    <property type="component" value="Chromosome 17"/>
</dbReference>
<dbReference type="RNAct" id="Q8NFI3">
    <property type="molecule type" value="protein"/>
</dbReference>
<dbReference type="Bgee" id="ENSG00000167280">
    <property type="expression patterns" value="Expressed in mucosa of transverse colon and 195 other cell types or tissues"/>
</dbReference>
<dbReference type="ExpressionAtlas" id="Q8NFI3">
    <property type="expression patterns" value="baseline and differential"/>
</dbReference>
<dbReference type="GO" id="GO:0005829">
    <property type="term" value="C:cytosol"/>
    <property type="evidence" value="ECO:0000304"/>
    <property type="project" value="Reactome"/>
</dbReference>
<dbReference type="GO" id="GO:0033925">
    <property type="term" value="F:mannosyl-glycoprotein endo-beta-N-acetylglucosaminidase activity"/>
    <property type="evidence" value="ECO:0000314"/>
    <property type="project" value="FlyBase"/>
</dbReference>
<dbReference type="GO" id="GO:0006491">
    <property type="term" value="P:N-glycan processing"/>
    <property type="evidence" value="ECO:0000318"/>
    <property type="project" value="GO_Central"/>
</dbReference>
<dbReference type="GO" id="GO:0006457">
    <property type="term" value="P:protein folding"/>
    <property type="evidence" value="ECO:0000304"/>
    <property type="project" value="Reactome"/>
</dbReference>
<dbReference type="CDD" id="cd06547">
    <property type="entry name" value="GH85_ENGase"/>
    <property type="match status" value="1"/>
</dbReference>
<dbReference type="FunFam" id="3.20.20.80:FF:000043">
    <property type="entry name" value="cytosolic endo-beta-N-acetylglucosaminidase"/>
    <property type="match status" value="1"/>
</dbReference>
<dbReference type="Gene3D" id="2.60.120.260">
    <property type="entry name" value="Galactose-binding domain-like"/>
    <property type="match status" value="1"/>
</dbReference>
<dbReference type="Gene3D" id="3.20.20.80">
    <property type="entry name" value="Glycosidases"/>
    <property type="match status" value="1"/>
</dbReference>
<dbReference type="InterPro" id="IPR001357">
    <property type="entry name" value="BRCT_dom"/>
</dbReference>
<dbReference type="InterPro" id="IPR032979">
    <property type="entry name" value="ENGase"/>
</dbReference>
<dbReference type="InterPro" id="IPR005201">
    <property type="entry name" value="Glyco_hydro_85"/>
</dbReference>
<dbReference type="PANTHER" id="PTHR13246:SF1">
    <property type="entry name" value="CYTOSOLIC ENDO-BETA-N-ACETYLGLUCOSAMINIDASE"/>
    <property type="match status" value="1"/>
</dbReference>
<dbReference type="PANTHER" id="PTHR13246">
    <property type="entry name" value="ENDO BETA N-ACETYLGLUCOSAMINIDASE"/>
    <property type="match status" value="1"/>
</dbReference>
<dbReference type="Pfam" id="PF03644">
    <property type="entry name" value="Glyco_hydro_85"/>
    <property type="match status" value="1"/>
</dbReference>
<dbReference type="PROSITE" id="PS50172">
    <property type="entry name" value="BRCT"/>
    <property type="match status" value="1"/>
</dbReference>
<comment type="function">
    <text evidence="4">Endoglycosidase that releases N-glycans from glycoproteins by cleaving the beta-1,4-glycosidic bond in the N,N'-diacetylchitobiose core. Involved in the processing of free oligosaccharides in the cytosol.</text>
</comment>
<comment type="catalytic activity">
    <reaction>
        <text>an N(4)-(oligosaccharide-(1-&gt;3)-[oligosaccharide-(1-&gt;6)]-beta-D-Man-(1-&gt;4)-beta-D-GlcNAc-(1-&gt;4)-alpha-D-GlcNAc)-L-asparaginyl-[protein] + H2O = an oligosaccharide-(1-&gt;3)-[oligosaccharide-(1-&gt;6)]-beta-D-Man-(1-&gt;4)-D-GlcNAc + N(4)-(N-acetyl-beta-D-glucosaminyl)-L-asparaginyl-[protein]</text>
        <dbReference type="Rhea" id="RHEA:73067"/>
        <dbReference type="Rhea" id="RHEA-COMP:12603"/>
        <dbReference type="Rhea" id="RHEA-COMP:18176"/>
        <dbReference type="ChEBI" id="CHEBI:15377"/>
        <dbReference type="ChEBI" id="CHEBI:132248"/>
        <dbReference type="ChEBI" id="CHEBI:192714"/>
        <dbReference type="ChEBI" id="CHEBI:192715"/>
        <dbReference type="EC" id="3.2.1.96"/>
    </reaction>
</comment>
<comment type="subcellular location">
    <subcellularLocation>
        <location evidence="1">Cytoplasm</location>
        <location evidence="1">Cytosol</location>
    </subcellularLocation>
</comment>
<comment type="alternative products">
    <event type="alternative splicing"/>
    <isoform>
        <id>Q8NFI3-1</id>
        <name>1</name>
        <sequence type="displayed"/>
    </isoform>
    <isoform>
        <id>Q8NFI3-2</id>
        <name>2</name>
        <sequence type="described" ref="VSP_032836 VSP_032837"/>
    </isoform>
    <isoform>
        <id>Q8NFI3-3</id>
        <name>3</name>
        <sequence type="described" ref="VSP_032835 VSP_032838"/>
    </isoform>
</comment>
<comment type="tissue specificity">
    <text evidence="4">Widely expressed. Expressed at higher level in thymus and spleen.</text>
</comment>
<comment type="similarity">
    <text evidence="8">Belongs to the glycosyl hydrolase 85 family.</text>
</comment>
<comment type="sequence caution" evidence="8">
    <conflict type="frameshift">
        <sequence resource="EMBL-CDS" id="AAH24213"/>
    </conflict>
</comment>
<gene>
    <name type="primary">ENGASE</name>
</gene>